<sequence length="439" mass="48336">MSSEDLSAPGPSAPDSSWSSTGPSTKFELERETELRLEVEGTDPVRVELVSGLAEVFGTELTRNKKYTFPPGSRAAIFTWHGCTVQLWGSPDMAYVSRDTPMLLYLNTQVGLEQMRVQAEREGERGPRVLVAGPSDVGKSTLCRLLLNYAVRRGRRPTLVELDVGQGSVSVPGTMGALCVERPADVEEGFSAQAPLVYHFGSTTPGTNIKLYNKLTSRLAHVFNLRCDSNRRASVSGCLINTCGWVKGSGYQALIHAASAFEVDVVLVLDQERLYNDLLRDLPHFVRTLLLPKSGGASERSKECRRESRDQRVREYFYGPRGSLYPHAFEIKFSEVRVYKVGAPTIPDSCLPLGMSQEDNQLKLVPVTPGRDMAHHLLSVVPLDGGSAEEGIEERSVAGFIVITGVDTERQTLTLLSPAPRPLPKCVLLIMDIRFMDLK</sequence>
<reference key="1">
    <citation type="submission" date="2004-05" db="EMBL/GenBank/DDBJ databases">
        <authorList>
            <consortium name="NIH - Xenopus Gene Collection (XGC) project"/>
        </authorList>
    </citation>
    <scope>NUCLEOTIDE SEQUENCE [LARGE SCALE MRNA]</scope>
    <source>
        <tissue>Embryo</tissue>
    </source>
</reference>
<keyword id="KW-0067">ATP-binding</keyword>
<keyword id="KW-0418">Kinase</keyword>
<keyword id="KW-0507">mRNA processing</keyword>
<keyword id="KW-0547">Nucleotide-binding</keyword>
<keyword id="KW-0539">Nucleus</keyword>
<keyword id="KW-1185">Reference proteome</keyword>
<keyword id="KW-0808">Transferase</keyword>
<keyword id="KW-0819">tRNA processing</keyword>
<comment type="function">
    <text evidence="1">Polynucleotide kinase that can phosphorylate the 5'-hydroxyl groups of double-stranded RNA (dsRNA), single-stranded RNA (ssRNA), double stranded DNA (dsDNA) and double-stranded DNA:RNA hybrids. dsRNA is phosphorylated more efficiently than dsDNA, and the RNA component of a DNA:RNA hybrid is phosphorylated more efficiently than the DNA component. Plays a role in both tRNA splicing and mRNA 3'-end formation. Component of the tRNA splicing endonuclease complex: phosphorylates the 5'-terminus of the tRNA 3'-exon during tRNA splicing; this phosphorylation event is a prerequisite for the subsequent ligation of the two exon halves and the production of a mature tRNA. Its role in tRNA splicing and maturation is required for cerebellar development. Component of the pre-mRNA cleavage complex II (CF-II), which seems to be required for mRNA 3'-end formation. Also phosphorylates the 5'-terminus of exogenously introduced short interfering RNAs (siRNAs), which is a necessary prerequisite for their incorporation into the RNA-induced silencing complex (RISC). However, endogenous siRNAs and microRNAs (miRNAs) that are produced by the cleavage of dsRNA precursors by dicer1 already contain a 5'-phosphate group, so this protein may be dispensible for normal RNA-mediated gene silencing (By similarity).</text>
</comment>
<comment type="catalytic activity">
    <reaction evidence="2">
        <text>a 5'-end dephospho-2'-deoxyribonucleoside-DNA + ATP = a 5'-end 5'-phospho-2'-deoxyribonucleoside-DNA + ADP + H(+)</text>
        <dbReference type="Rhea" id="RHEA:15669"/>
        <dbReference type="Rhea" id="RHEA-COMP:13180"/>
        <dbReference type="Rhea" id="RHEA-COMP:13184"/>
        <dbReference type="ChEBI" id="CHEBI:15378"/>
        <dbReference type="ChEBI" id="CHEBI:30616"/>
        <dbReference type="ChEBI" id="CHEBI:136412"/>
        <dbReference type="ChEBI" id="CHEBI:136416"/>
        <dbReference type="ChEBI" id="CHEBI:456216"/>
        <dbReference type="EC" id="2.7.1.78"/>
    </reaction>
</comment>
<comment type="catalytic activity">
    <reaction evidence="2">
        <text>a 5'-end dephospho-ribonucleoside-RNA + ATP = a 5'-end 5'-phospho-ribonucleoside-RNA + ADP + H(+)</text>
        <dbReference type="Rhea" id="RHEA:54580"/>
        <dbReference type="Rhea" id="RHEA-COMP:13936"/>
        <dbReference type="Rhea" id="RHEA-COMP:15179"/>
        <dbReference type="ChEBI" id="CHEBI:15378"/>
        <dbReference type="ChEBI" id="CHEBI:30616"/>
        <dbReference type="ChEBI" id="CHEBI:138282"/>
        <dbReference type="ChEBI" id="CHEBI:138284"/>
        <dbReference type="ChEBI" id="CHEBI:456216"/>
        <dbReference type="EC" id="2.7.1.78"/>
    </reaction>
</comment>
<comment type="subunit">
    <text evidence="2">Component of the tRNA splicing endonuclease complex. Component of pre-mRNA cleavage complex II (CF-II).</text>
</comment>
<comment type="subcellular location">
    <subcellularLocation>
        <location evidence="2">Nucleus</location>
    </subcellularLocation>
</comment>
<comment type="similarity">
    <text evidence="2">Belongs to the Clp1 family. Clp1 subfamily.</text>
</comment>
<protein>
    <recommendedName>
        <fullName evidence="2">Polyribonucleotide 5'-hydroxyl-kinase Clp1</fullName>
        <ecNumber evidence="2">2.7.1.78</ecNumber>
    </recommendedName>
    <alternativeName>
        <fullName evidence="2">Polyadenylation factor Clp1</fullName>
    </alternativeName>
    <alternativeName>
        <fullName evidence="2">Polynucleotide kinase Clp1</fullName>
    </alternativeName>
    <alternativeName>
        <fullName evidence="2">Pre-mRNA cleavage complex II protein Clp1</fullName>
    </alternativeName>
</protein>
<evidence type="ECO:0000250" key="1"/>
<evidence type="ECO:0000255" key="2">
    <source>
        <dbReference type="HAMAP-Rule" id="MF_03035"/>
    </source>
</evidence>
<evidence type="ECO:0000256" key="3">
    <source>
        <dbReference type="SAM" id="MobiDB-lite"/>
    </source>
</evidence>
<name>CLP1_XENLA</name>
<dbReference type="EC" id="2.7.1.78" evidence="2"/>
<dbReference type="EMBL" id="BC070530">
    <property type="protein sequence ID" value="AAH70530.1"/>
    <property type="molecule type" value="mRNA"/>
</dbReference>
<dbReference type="RefSeq" id="NP_001084787.1">
    <property type="nucleotide sequence ID" value="NM_001091318.1"/>
</dbReference>
<dbReference type="RefSeq" id="XP_018079928.1">
    <property type="nucleotide sequence ID" value="XM_018224439.1"/>
</dbReference>
<dbReference type="SMR" id="Q6NS21"/>
<dbReference type="IntAct" id="Q6NS21">
    <property type="interactions" value="1"/>
</dbReference>
<dbReference type="DNASU" id="431824"/>
<dbReference type="GeneID" id="431824"/>
<dbReference type="KEGG" id="xla:431824"/>
<dbReference type="AGR" id="Xenbase:XB-GENE-1008976"/>
<dbReference type="CTD" id="431824"/>
<dbReference type="Xenbase" id="XB-GENE-1008976">
    <property type="gene designation" value="clp1.L"/>
</dbReference>
<dbReference type="OrthoDB" id="258143at2759"/>
<dbReference type="Proteomes" id="UP000186698">
    <property type="component" value="Chromosome 7L"/>
</dbReference>
<dbReference type="Bgee" id="431824">
    <property type="expression patterns" value="Expressed in egg cell and 19 other cell types or tissues"/>
</dbReference>
<dbReference type="GO" id="GO:0005849">
    <property type="term" value="C:mRNA cleavage factor complex"/>
    <property type="evidence" value="ECO:0007669"/>
    <property type="project" value="UniProtKB-UniRule"/>
</dbReference>
<dbReference type="GO" id="GO:0005634">
    <property type="term" value="C:nucleus"/>
    <property type="evidence" value="ECO:0000318"/>
    <property type="project" value="GO_Central"/>
</dbReference>
<dbReference type="GO" id="GO:0000214">
    <property type="term" value="C:tRNA-intron endonuclease complex"/>
    <property type="evidence" value="ECO:0000250"/>
    <property type="project" value="UniProtKB"/>
</dbReference>
<dbReference type="GO" id="GO:0005524">
    <property type="term" value="F:ATP binding"/>
    <property type="evidence" value="ECO:0007669"/>
    <property type="project" value="UniProtKB-UniRule"/>
</dbReference>
<dbReference type="GO" id="GO:0046404">
    <property type="term" value="F:ATP-dependent polydeoxyribonucleotide 5'-hydroxyl-kinase activity"/>
    <property type="evidence" value="ECO:0007669"/>
    <property type="project" value="UniProtKB-UniRule"/>
</dbReference>
<dbReference type="GO" id="GO:0051736">
    <property type="term" value="F:ATP-dependent polyribonucleotide 5'-hydroxyl-kinase activity"/>
    <property type="evidence" value="ECO:0007669"/>
    <property type="project" value="UniProtKB-UniRule"/>
</dbReference>
<dbReference type="GO" id="GO:0051731">
    <property type="term" value="F:polynucleotide 5'-hydroxyl-kinase activity"/>
    <property type="evidence" value="ECO:0000318"/>
    <property type="project" value="GO_Central"/>
</dbReference>
<dbReference type="GO" id="GO:0021695">
    <property type="term" value="P:cerebellar cortex development"/>
    <property type="evidence" value="ECO:0000250"/>
    <property type="project" value="UniProtKB"/>
</dbReference>
<dbReference type="GO" id="GO:0098795">
    <property type="term" value="P:global gene silencing by mRNA cleavage"/>
    <property type="evidence" value="ECO:0000250"/>
    <property type="project" value="UniProtKB"/>
</dbReference>
<dbReference type="GO" id="GO:0031124">
    <property type="term" value="P:mRNA 3'-end processing"/>
    <property type="evidence" value="ECO:0007669"/>
    <property type="project" value="UniProtKB-UniRule"/>
</dbReference>
<dbReference type="GO" id="GO:0070922">
    <property type="term" value="P:RISC complex assembly"/>
    <property type="evidence" value="ECO:0000250"/>
    <property type="project" value="UniProtKB"/>
</dbReference>
<dbReference type="GO" id="GO:0006388">
    <property type="term" value="P:tRNA splicing, via endonucleolytic cleavage and ligation"/>
    <property type="evidence" value="ECO:0000250"/>
    <property type="project" value="UniProtKB"/>
</dbReference>
<dbReference type="FunFam" id="2.40.30.330:FF:000001">
    <property type="entry name" value="Protein CLP1 homolog"/>
    <property type="match status" value="1"/>
</dbReference>
<dbReference type="FunFam" id="3.40.50.300:FF:000454">
    <property type="entry name" value="Protein CLP1 homolog"/>
    <property type="match status" value="1"/>
</dbReference>
<dbReference type="FunFam" id="2.60.120.1030:FF:000001">
    <property type="entry name" value="Protein CLP1 homolog 5"/>
    <property type="match status" value="1"/>
</dbReference>
<dbReference type="Gene3D" id="2.60.120.1030">
    <property type="entry name" value="Clp1, DNA binding domain"/>
    <property type="match status" value="1"/>
</dbReference>
<dbReference type="Gene3D" id="3.40.50.300">
    <property type="entry name" value="P-loop containing nucleotide triphosphate hydrolases"/>
    <property type="match status" value="1"/>
</dbReference>
<dbReference type="Gene3D" id="2.40.30.330">
    <property type="entry name" value="Pre-mRNA cleavage complex subunit Clp1, C-terminal domain"/>
    <property type="match status" value="1"/>
</dbReference>
<dbReference type="HAMAP" id="MF_03035">
    <property type="entry name" value="Clp1"/>
    <property type="match status" value="1"/>
</dbReference>
<dbReference type="InterPro" id="IPR028606">
    <property type="entry name" value="Clp1"/>
</dbReference>
<dbReference type="InterPro" id="IPR045116">
    <property type="entry name" value="Clp1/Grc3"/>
</dbReference>
<dbReference type="InterPro" id="IPR010655">
    <property type="entry name" value="Clp1_C"/>
</dbReference>
<dbReference type="InterPro" id="IPR038238">
    <property type="entry name" value="Clp1_C_sf"/>
</dbReference>
<dbReference type="InterPro" id="IPR032324">
    <property type="entry name" value="Clp1_N"/>
</dbReference>
<dbReference type="InterPro" id="IPR038239">
    <property type="entry name" value="Clp1_N_sf"/>
</dbReference>
<dbReference type="InterPro" id="IPR032319">
    <property type="entry name" value="CLP1_P"/>
</dbReference>
<dbReference type="InterPro" id="IPR027417">
    <property type="entry name" value="P-loop_NTPase"/>
</dbReference>
<dbReference type="PANTHER" id="PTHR12755">
    <property type="entry name" value="CLEAVAGE/POLYADENYLATION FACTOR IA SUBUNIT CLP1P"/>
    <property type="match status" value="1"/>
</dbReference>
<dbReference type="PANTHER" id="PTHR12755:SF6">
    <property type="entry name" value="POLYRIBONUCLEOTIDE 5'-HYDROXYL-KINASE CLP1"/>
    <property type="match status" value="1"/>
</dbReference>
<dbReference type="Pfam" id="PF06807">
    <property type="entry name" value="Clp1"/>
    <property type="match status" value="1"/>
</dbReference>
<dbReference type="Pfam" id="PF16573">
    <property type="entry name" value="CLP1_N"/>
    <property type="match status" value="1"/>
</dbReference>
<dbReference type="Pfam" id="PF16575">
    <property type="entry name" value="CLP1_P"/>
    <property type="match status" value="1"/>
</dbReference>
<dbReference type="SUPFAM" id="SSF52540">
    <property type="entry name" value="P-loop containing nucleoside triphosphate hydrolases"/>
    <property type="match status" value="2"/>
</dbReference>
<organism>
    <name type="scientific">Xenopus laevis</name>
    <name type="common">African clawed frog</name>
    <dbReference type="NCBI Taxonomy" id="8355"/>
    <lineage>
        <taxon>Eukaryota</taxon>
        <taxon>Metazoa</taxon>
        <taxon>Chordata</taxon>
        <taxon>Craniata</taxon>
        <taxon>Vertebrata</taxon>
        <taxon>Euteleostomi</taxon>
        <taxon>Amphibia</taxon>
        <taxon>Batrachia</taxon>
        <taxon>Anura</taxon>
        <taxon>Pipoidea</taxon>
        <taxon>Pipidae</taxon>
        <taxon>Xenopodinae</taxon>
        <taxon>Xenopus</taxon>
        <taxon>Xenopus</taxon>
    </lineage>
</organism>
<feature type="chain" id="PRO_0000375170" description="Polyribonucleotide 5'-hydroxyl-kinase Clp1">
    <location>
        <begin position="1"/>
        <end position="439"/>
    </location>
</feature>
<feature type="region of interest" description="Disordered" evidence="3">
    <location>
        <begin position="1"/>
        <end position="29"/>
    </location>
</feature>
<feature type="compositionally biased region" description="Polar residues" evidence="3">
    <location>
        <begin position="14"/>
        <end position="24"/>
    </location>
</feature>
<feature type="binding site" evidence="2">
    <location>
        <position position="34"/>
    </location>
    <ligand>
        <name>ATP</name>
        <dbReference type="ChEBI" id="CHEBI:30616"/>
    </ligand>
</feature>
<feature type="binding site" evidence="2">
    <location>
        <position position="74"/>
    </location>
    <ligand>
        <name>ATP</name>
        <dbReference type="ChEBI" id="CHEBI:30616"/>
    </ligand>
</feature>
<feature type="binding site" evidence="2">
    <location>
        <begin position="136"/>
        <end position="141"/>
    </location>
    <ligand>
        <name>ATP</name>
        <dbReference type="ChEBI" id="CHEBI:30616"/>
    </ligand>
</feature>
<accession>Q6NS21</accession>
<gene>
    <name type="primary">clp1</name>
</gene>
<proteinExistence type="evidence at transcript level"/>